<accession>C0Q1V0</accession>
<gene>
    <name evidence="1" type="primary">tdh</name>
    <name type="ordered locus">SPC_3790</name>
</gene>
<keyword id="KW-0963">Cytoplasm</keyword>
<keyword id="KW-0479">Metal-binding</keyword>
<keyword id="KW-0520">NAD</keyword>
<keyword id="KW-0560">Oxidoreductase</keyword>
<keyword id="KW-0862">Zinc</keyword>
<protein>
    <recommendedName>
        <fullName evidence="1">L-threonine 3-dehydrogenase</fullName>
        <shortName evidence="1">TDH</shortName>
        <ecNumber evidence="1">1.1.1.103</ecNumber>
    </recommendedName>
</protein>
<sequence>MKALSKLKAEEGIWMTDVPEPEVGHNDLLIKIRKTAICGTDVHIYNWDDWSQKTIPVPMVVGHEYVGEVVGIGQEVKGFKIGDRVSGEGHITCGHCRNCRGGRTHLCRNTTGVGVNRPGCFAEYLVIPAFNAFKIPDNISDDLASIFDPFGNAVHTALSFDLVGEDVLVSGAGPIGVMAAAVAKHVGARHVVITDVNEYRLELARKMGVTRAVNVAKESLNDVMAELGMTEGFDVGLEMSGAPPAFRTMLDTMNHGGRIAMLGIPPSDMSIDWTKVIFKGLFIKGIYGREMFETWYKMAALIQSGLDLSPIITHRFSIDDFQKGFDAMRSGQSGKVILSWD</sequence>
<reference key="1">
    <citation type="journal article" date="2009" name="PLoS ONE">
        <title>Salmonella paratyphi C: genetic divergence from Salmonella choleraesuis and pathogenic convergence with Salmonella typhi.</title>
        <authorList>
            <person name="Liu W.-Q."/>
            <person name="Feng Y."/>
            <person name="Wang Y."/>
            <person name="Zou Q.-H."/>
            <person name="Chen F."/>
            <person name="Guo J.-T."/>
            <person name="Peng Y.-H."/>
            <person name="Jin Y."/>
            <person name="Li Y.-G."/>
            <person name="Hu S.-N."/>
            <person name="Johnston R.N."/>
            <person name="Liu G.-R."/>
            <person name="Liu S.-L."/>
        </authorList>
    </citation>
    <scope>NUCLEOTIDE SEQUENCE [LARGE SCALE GENOMIC DNA]</scope>
    <source>
        <strain>RKS4594</strain>
    </source>
</reference>
<feature type="chain" id="PRO_1000147263" description="L-threonine 3-dehydrogenase">
    <location>
        <begin position="1"/>
        <end position="341"/>
    </location>
</feature>
<feature type="active site" description="Charge relay system" evidence="1">
    <location>
        <position position="40"/>
    </location>
</feature>
<feature type="active site" description="Charge relay system" evidence="1">
    <location>
        <position position="43"/>
    </location>
</feature>
<feature type="binding site" evidence="1">
    <location>
        <position position="38"/>
    </location>
    <ligand>
        <name>Zn(2+)</name>
        <dbReference type="ChEBI" id="CHEBI:29105"/>
        <label>1</label>
        <note>catalytic</note>
    </ligand>
</feature>
<feature type="binding site" evidence="1">
    <location>
        <position position="63"/>
    </location>
    <ligand>
        <name>Zn(2+)</name>
        <dbReference type="ChEBI" id="CHEBI:29105"/>
        <label>1</label>
        <note>catalytic</note>
    </ligand>
</feature>
<feature type="binding site" evidence="1">
    <location>
        <position position="64"/>
    </location>
    <ligand>
        <name>Zn(2+)</name>
        <dbReference type="ChEBI" id="CHEBI:29105"/>
        <label>1</label>
        <note>catalytic</note>
    </ligand>
</feature>
<feature type="binding site" evidence="1">
    <location>
        <position position="93"/>
    </location>
    <ligand>
        <name>Zn(2+)</name>
        <dbReference type="ChEBI" id="CHEBI:29105"/>
        <label>2</label>
    </ligand>
</feature>
<feature type="binding site" evidence="1">
    <location>
        <position position="96"/>
    </location>
    <ligand>
        <name>Zn(2+)</name>
        <dbReference type="ChEBI" id="CHEBI:29105"/>
        <label>2</label>
    </ligand>
</feature>
<feature type="binding site" evidence="1">
    <location>
        <position position="99"/>
    </location>
    <ligand>
        <name>Zn(2+)</name>
        <dbReference type="ChEBI" id="CHEBI:29105"/>
        <label>2</label>
    </ligand>
</feature>
<feature type="binding site" evidence="1">
    <location>
        <position position="107"/>
    </location>
    <ligand>
        <name>Zn(2+)</name>
        <dbReference type="ChEBI" id="CHEBI:29105"/>
        <label>2</label>
    </ligand>
</feature>
<feature type="binding site" evidence="1">
    <location>
        <position position="175"/>
    </location>
    <ligand>
        <name>NAD(+)</name>
        <dbReference type="ChEBI" id="CHEBI:57540"/>
    </ligand>
</feature>
<feature type="binding site" evidence="1">
    <location>
        <position position="195"/>
    </location>
    <ligand>
        <name>NAD(+)</name>
        <dbReference type="ChEBI" id="CHEBI:57540"/>
    </ligand>
</feature>
<feature type="binding site" evidence="1">
    <location>
        <position position="200"/>
    </location>
    <ligand>
        <name>NAD(+)</name>
        <dbReference type="ChEBI" id="CHEBI:57540"/>
    </ligand>
</feature>
<feature type="binding site" evidence="1">
    <location>
        <begin position="262"/>
        <end position="264"/>
    </location>
    <ligand>
        <name>NAD(+)</name>
        <dbReference type="ChEBI" id="CHEBI:57540"/>
    </ligand>
</feature>
<feature type="binding site" evidence="1">
    <location>
        <begin position="286"/>
        <end position="287"/>
    </location>
    <ligand>
        <name>NAD(+)</name>
        <dbReference type="ChEBI" id="CHEBI:57540"/>
    </ligand>
</feature>
<feature type="site" description="Important for catalytic activity for the proton relay mechanism but does not participate directly in the coordination of zinc atom" evidence="1">
    <location>
        <position position="148"/>
    </location>
</feature>
<comment type="function">
    <text evidence="1">Catalyzes the NAD(+)-dependent oxidation of L-threonine to 2-amino-3-ketobutyrate.</text>
</comment>
<comment type="catalytic activity">
    <reaction evidence="1">
        <text>L-threonine + NAD(+) = (2S)-2-amino-3-oxobutanoate + NADH + H(+)</text>
        <dbReference type="Rhea" id="RHEA:13161"/>
        <dbReference type="ChEBI" id="CHEBI:15378"/>
        <dbReference type="ChEBI" id="CHEBI:57540"/>
        <dbReference type="ChEBI" id="CHEBI:57926"/>
        <dbReference type="ChEBI" id="CHEBI:57945"/>
        <dbReference type="ChEBI" id="CHEBI:78948"/>
        <dbReference type="EC" id="1.1.1.103"/>
    </reaction>
</comment>
<comment type="cofactor">
    <cofactor evidence="1">
        <name>Zn(2+)</name>
        <dbReference type="ChEBI" id="CHEBI:29105"/>
    </cofactor>
    <text evidence="1">Binds 2 Zn(2+) ions per subunit.</text>
</comment>
<comment type="pathway">
    <text evidence="1">Amino-acid degradation; L-threonine degradation via oxydo-reductase pathway; glycine from L-threonine: step 1/2.</text>
</comment>
<comment type="subunit">
    <text evidence="1">Homotetramer.</text>
</comment>
<comment type="subcellular location">
    <subcellularLocation>
        <location evidence="1">Cytoplasm</location>
    </subcellularLocation>
</comment>
<comment type="similarity">
    <text evidence="1">Belongs to the zinc-containing alcohol dehydrogenase family.</text>
</comment>
<dbReference type="EC" id="1.1.1.103" evidence="1"/>
<dbReference type="EMBL" id="CP000857">
    <property type="protein sequence ID" value="ACN47866.1"/>
    <property type="molecule type" value="Genomic_DNA"/>
</dbReference>
<dbReference type="RefSeq" id="WP_000645990.1">
    <property type="nucleotide sequence ID" value="NC_012125.1"/>
</dbReference>
<dbReference type="SMR" id="C0Q1V0"/>
<dbReference type="KEGG" id="sei:SPC_3790"/>
<dbReference type="HOGENOM" id="CLU_026673_11_0_6"/>
<dbReference type="UniPathway" id="UPA00046">
    <property type="reaction ID" value="UER00505"/>
</dbReference>
<dbReference type="Proteomes" id="UP000001599">
    <property type="component" value="Chromosome"/>
</dbReference>
<dbReference type="GO" id="GO:0005737">
    <property type="term" value="C:cytoplasm"/>
    <property type="evidence" value="ECO:0007669"/>
    <property type="project" value="UniProtKB-SubCell"/>
</dbReference>
<dbReference type="GO" id="GO:0008743">
    <property type="term" value="F:L-threonine 3-dehydrogenase activity"/>
    <property type="evidence" value="ECO:0007669"/>
    <property type="project" value="UniProtKB-UniRule"/>
</dbReference>
<dbReference type="GO" id="GO:0008270">
    <property type="term" value="F:zinc ion binding"/>
    <property type="evidence" value="ECO:0007669"/>
    <property type="project" value="UniProtKB-UniRule"/>
</dbReference>
<dbReference type="GO" id="GO:0019518">
    <property type="term" value="P:L-threonine catabolic process to glycine"/>
    <property type="evidence" value="ECO:0007669"/>
    <property type="project" value="UniProtKB-UniPathway"/>
</dbReference>
<dbReference type="FunFam" id="3.40.50.720:FF:000059">
    <property type="entry name" value="L-threonine 3-dehydrogenase"/>
    <property type="match status" value="1"/>
</dbReference>
<dbReference type="Gene3D" id="3.90.180.10">
    <property type="entry name" value="Medium-chain alcohol dehydrogenases, catalytic domain"/>
    <property type="match status" value="1"/>
</dbReference>
<dbReference type="Gene3D" id="3.40.50.720">
    <property type="entry name" value="NAD(P)-binding Rossmann-like Domain"/>
    <property type="match status" value="1"/>
</dbReference>
<dbReference type="HAMAP" id="MF_00627">
    <property type="entry name" value="Thr_dehydrog"/>
    <property type="match status" value="1"/>
</dbReference>
<dbReference type="InterPro" id="IPR013149">
    <property type="entry name" value="ADH-like_C"/>
</dbReference>
<dbReference type="InterPro" id="IPR013154">
    <property type="entry name" value="ADH-like_N"/>
</dbReference>
<dbReference type="InterPro" id="IPR002328">
    <property type="entry name" value="ADH_Zn_CS"/>
</dbReference>
<dbReference type="InterPro" id="IPR011032">
    <property type="entry name" value="GroES-like_sf"/>
</dbReference>
<dbReference type="InterPro" id="IPR004627">
    <property type="entry name" value="L-Threonine_3-DHase"/>
</dbReference>
<dbReference type="InterPro" id="IPR036291">
    <property type="entry name" value="NAD(P)-bd_dom_sf"/>
</dbReference>
<dbReference type="InterPro" id="IPR020843">
    <property type="entry name" value="PKS_ER"/>
</dbReference>
<dbReference type="InterPro" id="IPR050129">
    <property type="entry name" value="Zn_alcohol_dh"/>
</dbReference>
<dbReference type="NCBIfam" id="NF003808">
    <property type="entry name" value="PRK05396.1"/>
    <property type="match status" value="1"/>
</dbReference>
<dbReference type="NCBIfam" id="TIGR00692">
    <property type="entry name" value="tdh"/>
    <property type="match status" value="1"/>
</dbReference>
<dbReference type="PANTHER" id="PTHR43401">
    <property type="entry name" value="L-THREONINE 3-DEHYDROGENASE"/>
    <property type="match status" value="1"/>
</dbReference>
<dbReference type="PANTHER" id="PTHR43401:SF2">
    <property type="entry name" value="L-THREONINE 3-DEHYDROGENASE"/>
    <property type="match status" value="1"/>
</dbReference>
<dbReference type="Pfam" id="PF08240">
    <property type="entry name" value="ADH_N"/>
    <property type="match status" value="1"/>
</dbReference>
<dbReference type="Pfam" id="PF00107">
    <property type="entry name" value="ADH_zinc_N"/>
    <property type="match status" value="1"/>
</dbReference>
<dbReference type="SMART" id="SM00829">
    <property type="entry name" value="PKS_ER"/>
    <property type="match status" value="1"/>
</dbReference>
<dbReference type="SUPFAM" id="SSF50129">
    <property type="entry name" value="GroES-like"/>
    <property type="match status" value="1"/>
</dbReference>
<dbReference type="SUPFAM" id="SSF51735">
    <property type="entry name" value="NAD(P)-binding Rossmann-fold domains"/>
    <property type="match status" value="1"/>
</dbReference>
<dbReference type="PROSITE" id="PS00059">
    <property type="entry name" value="ADH_ZINC"/>
    <property type="match status" value="1"/>
</dbReference>
<name>TDH_SALPC</name>
<organism>
    <name type="scientific">Salmonella paratyphi C (strain RKS4594)</name>
    <dbReference type="NCBI Taxonomy" id="476213"/>
    <lineage>
        <taxon>Bacteria</taxon>
        <taxon>Pseudomonadati</taxon>
        <taxon>Pseudomonadota</taxon>
        <taxon>Gammaproteobacteria</taxon>
        <taxon>Enterobacterales</taxon>
        <taxon>Enterobacteriaceae</taxon>
        <taxon>Salmonella</taxon>
    </lineage>
</organism>
<evidence type="ECO:0000255" key="1">
    <source>
        <dbReference type="HAMAP-Rule" id="MF_00627"/>
    </source>
</evidence>
<proteinExistence type="inferred from homology"/>